<protein>
    <recommendedName>
        <fullName evidence="1">Cytochrome b559 subunit beta</fullName>
    </recommendedName>
    <alternativeName>
        <fullName evidence="1">PSII reaction center subunit VI</fullName>
    </alternativeName>
</protein>
<dbReference type="EMBL" id="AF022186">
    <property type="protein sequence ID" value="AAF13000.1"/>
    <property type="molecule type" value="Genomic_DNA"/>
</dbReference>
<dbReference type="RefSeq" id="NP_045046.1">
    <property type="nucleotide sequence ID" value="NC_001840.1"/>
</dbReference>
<dbReference type="PDB" id="4YUU">
    <property type="method" value="X-ray"/>
    <property type="resolution" value="2.77 A"/>
    <property type="chains" value="F1/F2/f1/f2=1-43"/>
</dbReference>
<dbReference type="PDBsum" id="4YUU"/>
<dbReference type="SMR" id="Q9TM21"/>
<dbReference type="GeneID" id="800297"/>
<dbReference type="GO" id="GO:0009535">
    <property type="term" value="C:chloroplast thylakoid membrane"/>
    <property type="evidence" value="ECO:0007669"/>
    <property type="project" value="UniProtKB-SubCell"/>
</dbReference>
<dbReference type="GO" id="GO:0009539">
    <property type="term" value="C:photosystem II reaction center"/>
    <property type="evidence" value="ECO:0007669"/>
    <property type="project" value="InterPro"/>
</dbReference>
<dbReference type="GO" id="GO:0009055">
    <property type="term" value="F:electron transfer activity"/>
    <property type="evidence" value="ECO:0007669"/>
    <property type="project" value="UniProtKB-UniRule"/>
</dbReference>
<dbReference type="GO" id="GO:0020037">
    <property type="term" value="F:heme binding"/>
    <property type="evidence" value="ECO:0007669"/>
    <property type="project" value="InterPro"/>
</dbReference>
<dbReference type="GO" id="GO:0005506">
    <property type="term" value="F:iron ion binding"/>
    <property type="evidence" value="ECO:0007669"/>
    <property type="project" value="UniProtKB-UniRule"/>
</dbReference>
<dbReference type="GO" id="GO:0009767">
    <property type="term" value="P:photosynthetic electron transport chain"/>
    <property type="evidence" value="ECO:0007669"/>
    <property type="project" value="InterPro"/>
</dbReference>
<dbReference type="HAMAP" id="MF_00643">
    <property type="entry name" value="PSII_PsbF"/>
    <property type="match status" value="1"/>
</dbReference>
<dbReference type="InterPro" id="IPR006241">
    <property type="entry name" value="PSII_cyt_b559_bsu"/>
</dbReference>
<dbReference type="InterPro" id="IPR006216">
    <property type="entry name" value="PSII_cyt_b559_CS"/>
</dbReference>
<dbReference type="InterPro" id="IPR013081">
    <property type="entry name" value="PSII_cyt_b559_N"/>
</dbReference>
<dbReference type="NCBIfam" id="TIGR01333">
    <property type="entry name" value="cyt_b559_beta"/>
    <property type="match status" value="1"/>
</dbReference>
<dbReference type="Pfam" id="PF00283">
    <property type="entry name" value="Cytochrom_B559"/>
    <property type="match status" value="1"/>
</dbReference>
<dbReference type="PIRSF" id="PIRSF000037">
    <property type="entry name" value="PsbF"/>
    <property type="match status" value="1"/>
</dbReference>
<dbReference type="SUPFAM" id="SSF161045">
    <property type="entry name" value="Cytochrome b559 subunits"/>
    <property type="match status" value="1"/>
</dbReference>
<dbReference type="PROSITE" id="PS00537">
    <property type="entry name" value="CYTOCHROME_B559"/>
    <property type="match status" value="1"/>
</dbReference>
<sequence length="43" mass="4955">MANKPLQPISYPIFTFRWLAIHGLAIPTVFFFGAITAMQFIQR</sequence>
<comment type="function">
    <text evidence="1">This b-type cytochrome is tightly associated with the reaction center of photosystem II (PSII). PSII is a light-driven water:plastoquinone oxidoreductase that uses light energy to abstract electrons from H(2)O, generating O(2) and a proton gradient subsequently used for ATP formation. It consists of a core antenna complex that captures photons, and an electron transfer chain that converts photonic excitation into a charge separation.</text>
</comment>
<comment type="cofactor">
    <cofactor evidence="1">
        <name>heme b</name>
        <dbReference type="ChEBI" id="CHEBI:60344"/>
    </cofactor>
    <text evidence="1">With its partner (PsbE) binds heme. PSII binds additional chlorophylls, carotenoids and specific lipids.</text>
</comment>
<comment type="subunit">
    <text evidence="2">Heterodimer of an alpha subunit and a beta subunit. PSII is composed of 1 copy each of membrane proteins PsbA, PsbB, PsbC, PsbD, PsbE, PsbF, PsbH, PsbI, PsbJ, PsbK, PsbL, PsbM, PsbT, PsbY, PsbZ, Psb30/Ycf12, at least 3 peripheral proteins of the oxygen-evolving complex and a large number of cofactors. It forms dimeric complexes.</text>
</comment>
<comment type="subcellular location">
    <subcellularLocation>
        <location evidence="1">Plastid</location>
        <location evidence="1">Chloroplast thylakoid membrane</location>
        <topology evidence="1">Single-pass membrane protein</topology>
    </subcellularLocation>
</comment>
<comment type="similarity">
    <text evidence="1">Belongs to the PsbE/PsbF family.</text>
</comment>
<proteinExistence type="evidence at protein level"/>
<accession>Q9TM21</accession>
<reference key="1">
    <citation type="journal article" date="2000" name="J. Mol. Evol.">
        <title>The structure and gene repertoire of an ancient red algal plastid genome.</title>
        <authorList>
            <person name="Gloeckner G."/>
            <person name="Rosenthal A."/>
            <person name="Valentin K.-U."/>
        </authorList>
    </citation>
    <scope>NUCLEOTIDE SEQUENCE [LARGE SCALE GENOMIC DNA]</scope>
    <source>
        <strain>RK-1</strain>
    </source>
</reference>
<geneLocation type="chloroplast"/>
<gene>
    <name evidence="1" type="primary">psbF</name>
</gene>
<evidence type="ECO:0000255" key="1">
    <source>
        <dbReference type="HAMAP-Rule" id="MF_00643"/>
    </source>
</evidence>
<evidence type="ECO:0000305" key="2"/>
<organism>
    <name type="scientific">Cyanidium caldarium</name>
    <name type="common">Red alga</name>
    <dbReference type="NCBI Taxonomy" id="2771"/>
    <lineage>
        <taxon>Eukaryota</taxon>
        <taxon>Rhodophyta</taxon>
        <taxon>Bangiophyceae</taxon>
        <taxon>Cyanidiales</taxon>
        <taxon>Cyanidiaceae</taxon>
        <taxon>Cyanidium</taxon>
    </lineage>
</organism>
<feature type="chain" id="PRO_0000200383" description="Cytochrome b559 subunit beta">
    <location>
        <begin position="1"/>
        <end position="43"/>
    </location>
</feature>
<feature type="transmembrane region" description="Helical" evidence="1">
    <location>
        <begin position="18"/>
        <end position="34"/>
    </location>
</feature>
<feature type="binding site" description="axial binding residue" evidence="1">
    <location>
        <position position="22"/>
    </location>
    <ligand>
        <name>heme</name>
        <dbReference type="ChEBI" id="CHEBI:30413"/>
        <note>ligand shared with alpha subunit</note>
    </ligand>
    <ligandPart>
        <name>Fe</name>
        <dbReference type="ChEBI" id="CHEBI:18248"/>
    </ligandPart>
</feature>
<name>PSBF_CYACA</name>
<keyword id="KW-0002">3D-structure</keyword>
<keyword id="KW-0150">Chloroplast</keyword>
<keyword id="KW-0249">Electron transport</keyword>
<keyword id="KW-0349">Heme</keyword>
<keyword id="KW-0408">Iron</keyword>
<keyword id="KW-0472">Membrane</keyword>
<keyword id="KW-0479">Metal-binding</keyword>
<keyword id="KW-0602">Photosynthesis</keyword>
<keyword id="KW-0604">Photosystem II</keyword>
<keyword id="KW-0934">Plastid</keyword>
<keyword id="KW-0793">Thylakoid</keyword>
<keyword id="KW-0812">Transmembrane</keyword>
<keyword id="KW-1133">Transmembrane helix</keyword>
<keyword id="KW-0813">Transport</keyword>